<name>HUTI_YERPG</name>
<sequence length="406" mass="43821">MVSVTHCDSLWFGADIITMRGGNYQLIPQGAIAVTGDKIVWIGPHAELPPIHAARQVVYEGGLITPGLIDCHTHLVFGDDRSNEFEQRLNGVSYAEIAANGGGIISTVRATRQASEQQLLEQALFRLKPLLAEGVTTIEIKSGYGLNLESEIKMLRVARRLGELLPIDVKTTCLAAHALPPEFIGQPDDYIDVVCNSIIPQVAVENLADAVDAFCEHLAFSPAQVERVFLAAQKAGLPVKLHAEQLSALRGATLAAKFHAISADHLEYATESDVQAMANAGTVAVLLPGAYYLLRETQCPPIDLFRQYKVPMALASDANPGTSPVLSLRLMLNMACTLFRMTPEEALAGVTCHAAQALGVQQTQGTLETGKLANWVHWPLSHPAELAYWLGGQLPATVVFRGEVRP</sequence>
<gene>
    <name evidence="1" type="primary">hutI</name>
    <name type="ordered locus">YpAngola_A2512</name>
</gene>
<comment type="function">
    <text evidence="1">Catalyzes the hydrolytic cleavage of the carbon-nitrogen bond in imidazolone-5-propanoate to yield N-formimidoyl-L-glutamate. It is the third step in the universal histidine degradation pathway.</text>
</comment>
<comment type="catalytic activity">
    <reaction evidence="1">
        <text>4-imidazolone-5-propanoate + H2O = N-formimidoyl-L-glutamate</text>
        <dbReference type="Rhea" id="RHEA:23660"/>
        <dbReference type="ChEBI" id="CHEBI:15377"/>
        <dbReference type="ChEBI" id="CHEBI:58928"/>
        <dbReference type="ChEBI" id="CHEBI:77893"/>
        <dbReference type="EC" id="3.5.2.7"/>
    </reaction>
</comment>
<comment type="cofactor">
    <cofactor evidence="1">
        <name>Zn(2+)</name>
        <dbReference type="ChEBI" id="CHEBI:29105"/>
    </cofactor>
    <cofactor evidence="1">
        <name>Fe(3+)</name>
        <dbReference type="ChEBI" id="CHEBI:29034"/>
    </cofactor>
    <text evidence="1">Binds 1 zinc or iron ion per subunit.</text>
</comment>
<comment type="pathway">
    <text evidence="1">Amino-acid degradation; L-histidine degradation into L-glutamate; N-formimidoyl-L-glutamate from L-histidine: step 3/3.</text>
</comment>
<comment type="subcellular location">
    <subcellularLocation>
        <location evidence="1">Cytoplasm</location>
    </subcellularLocation>
</comment>
<comment type="similarity">
    <text evidence="1">Belongs to the metallo-dependent hydrolases superfamily. HutI family.</text>
</comment>
<protein>
    <recommendedName>
        <fullName evidence="1">Imidazolonepropionase</fullName>
        <ecNumber evidence="1">3.5.2.7</ecNumber>
    </recommendedName>
    <alternativeName>
        <fullName evidence="1">Imidazolone-5-propionate hydrolase</fullName>
    </alternativeName>
</protein>
<evidence type="ECO:0000255" key="1">
    <source>
        <dbReference type="HAMAP-Rule" id="MF_00372"/>
    </source>
</evidence>
<keyword id="KW-0963">Cytoplasm</keyword>
<keyword id="KW-0369">Histidine metabolism</keyword>
<keyword id="KW-0378">Hydrolase</keyword>
<keyword id="KW-0408">Iron</keyword>
<keyword id="KW-0479">Metal-binding</keyword>
<keyword id="KW-0862">Zinc</keyword>
<reference key="1">
    <citation type="journal article" date="2010" name="J. Bacteriol.">
        <title>Genome sequence of the deep-rooted Yersinia pestis strain Angola reveals new insights into the evolution and pangenome of the plague bacterium.</title>
        <authorList>
            <person name="Eppinger M."/>
            <person name="Worsham P.L."/>
            <person name="Nikolich M.P."/>
            <person name="Riley D.R."/>
            <person name="Sebastian Y."/>
            <person name="Mou S."/>
            <person name="Achtman M."/>
            <person name="Lindler L.E."/>
            <person name="Ravel J."/>
        </authorList>
    </citation>
    <scope>NUCLEOTIDE SEQUENCE [LARGE SCALE GENOMIC DNA]</scope>
    <source>
        <strain>Angola</strain>
    </source>
</reference>
<proteinExistence type="inferred from homology"/>
<organism>
    <name type="scientific">Yersinia pestis bv. Antiqua (strain Angola)</name>
    <dbReference type="NCBI Taxonomy" id="349746"/>
    <lineage>
        <taxon>Bacteria</taxon>
        <taxon>Pseudomonadati</taxon>
        <taxon>Pseudomonadota</taxon>
        <taxon>Gammaproteobacteria</taxon>
        <taxon>Enterobacterales</taxon>
        <taxon>Yersiniaceae</taxon>
        <taxon>Yersinia</taxon>
    </lineage>
</organism>
<dbReference type="EC" id="3.5.2.7" evidence="1"/>
<dbReference type="EMBL" id="CP000901">
    <property type="protein sequence ID" value="ABX86045.1"/>
    <property type="molecule type" value="Genomic_DNA"/>
</dbReference>
<dbReference type="RefSeq" id="WP_002211281.1">
    <property type="nucleotide sequence ID" value="NZ_CP009935.1"/>
</dbReference>
<dbReference type="SMR" id="A9QZ55"/>
<dbReference type="GeneID" id="57976686"/>
<dbReference type="KEGG" id="ypg:YpAngola_A2512"/>
<dbReference type="PATRIC" id="fig|349746.12.peg.3531"/>
<dbReference type="UniPathway" id="UPA00379">
    <property type="reaction ID" value="UER00551"/>
</dbReference>
<dbReference type="GO" id="GO:0005737">
    <property type="term" value="C:cytoplasm"/>
    <property type="evidence" value="ECO:0007669"/>
    <property type="project" value="UniProtKB-SubCell"/>
</dbReference>
<dbReference type="GO" id="GO:0050480">
    <property type="term" value="F:imidazolonepropionase activity"/>
    <property type="evidence" value="ECO:0007669"/>
    <property type="project" value="UniProtKB-UniRule"/>
</dbReference>
<dbReference type="GO" id="GO:0005506">
    <property type="term" value="F:iron ion binding"/>
    <property type="evidence" value="ECO:0007669"/>
    <property type="project" value="UniProtKB-UniRule"/>
</dbReference>
<dbReference type="GO" id="GO:0008270">
    <property type="term" value="F:zinc ion binding"/>
    <property type="evidence" value="ECO:0007669"/>
    <property type="project" value="UniProtKB-UniRule"/>
</dbReference>
<dbReference type="GO" id="GO:0019556">
    <property type="term" value="P:L-histidine catabolic process to glutamate and formamide"/>
    <property type="evidence" value="ECO:0007669"/>
    <property type="project" value="UniProtKB-UniPathway"/>
</dbReference>
<dbReference type="GO" id="GO:0019557">
    <property type="term" value="P:L-histidine catabolic process to glutamate and formate"/>
    <property type="evidence" value="ECO:0007669"/>
    <property type="project" value="UniProtKB-UniPathway"/>
</dbReference>
<dbReference type="CDD" id="cd01296">
    <property type="entry name" value="Imidazolone-5PH"/>
    <property type="match status" value="1"/>
</dbReference>
<dbReference type="FunFam" id="3.20.20.140:FF:000007">
    <property type="entry name" value="Imidazolonepropionase"/>
    <property type="match status" value="1"/>
</dbReference>
<dbReference type="Gene3D" id="3.20.20.140">
    <property type="entry name" value="Metal-dependent hydrolases"/>
    <property type="match status" value="1"/>
</dbReference>
<dbReference type="Gene3D" id="2.30.40.10">
    <property type="entry name" value="Urease, subunit C, domain 1"/>
    <property type="match status" value="1"/>
</dbReference>
<dbReference type="HAMAP" id="MF_00372">
    <property type="entry name" value="HutI"/>
    <property type="match status" value="1"/>
</dbReference>
<dbReference type="InterPro" id="IPR006680">
    <property type="entry name" value="Amidohydro-rel"/>
</dbReference>
<dbReference type="InterPro" id="IPR005920">
    <property type="entry name" value="HutI"/>
</dbReference>
<dbReference type="InterPro" id="IPR011059">
    <property type="entry name" value="Metal-dep_hydrolase_composite"/>
</dbReference>
<dbReference type="InterPro" id="IPR032466">
    <property type="entry name" value="Metal_Hydrolase"/>
</dbReference>
<dbReference type="NCBIfam" id="TIGR01224">
    <property type="entry name" value="hutI"/>
    <property type="match status" value="1"/>
</dbReference>
<dbReference type="PANTHER" id="PTHR42752">
    <property type="entry name" value="IMIDAZOLONEPROPIONASE"/>
    <property type="match status" value="1"/>
</dbReference>
<dbReference type="PANTHER" id="PTHR42752:SF1">
    <property type="entry name" value="IMIDAZOLONEPROPIONASE-RELATED"/>
    <property type="match status" value="1"/>
</dbReference>
<dbReference type="Pfam" id="PF01979">
    <property type="entry name" value="Amidohydro_1"/>
    <property type="match status" value="1"/>
</dbReference>
<dbReference type="SUPFAM" id="SSF51338">
    <property type="entry name" value="Composite domain of metallo-dependent hydrolases"/>
    <property type="match status" value="1"/>
</dbReference>
<dbReference type="SUPFAM" id="SSF51556">
    <property type="entry name" value="Metallo-dependent hydrolases"/>
    <property type="match status" value="1"/>
</dbReference>
<feature type="chain" id="PRO_1000121564" description="Imidazolonepropionase">
    <location>
        <begin position="1"/>
        <end position="406"/>
    </location>
</feature>
<feature type="binding site" evidence="1">
    <location>
        <position position="72"/>
    </location>
    <ligand>
        <name>Fe(3+)</name>
        <dbReference type="ChEBI" id="CHEBI:29034"/>
    </ligand>
</feature>
<feature type="binding site" evidence="1">
    <location>
        <position position="72"/>
    </location>
    <ligand>
        <name>Zn(2+)</name>
        <dbReference type="ChEBI" id="CHEBI:29105"/>
    </ligand>
</feature>
<feature type="binding site" evidence="1">
    <location>
        <position position="74"/>
    </location>
    <ligand>
        <name>Fe(3+)</name>
        <dbReference type="ChEBI" id="CHEBI:29034"/>
    </ligand>
</feature>
<feature type="binding site" evidence="1">
    <location>
        <position position="74"/>
    </location>
    <ligand>
        <name>Zn(2+)</name>
        <dbReference type="ChEBI" id="CHEBI:29105"/>
    </ligand>
</feature>
<feature type="binding site" evidence="1">
    <location>
        <position position="81"/>
    </location>
    <ligand>
        <name>4-imidazolone-5-propanoate</name>
        <dbReference type="ChEBI" id="CHEBI:77893"/>
    </ligand>
</feature>
<feature type="binding site" evidence="1">
    <location>
        <position position="144"/>
    </location>
    <ligand>
        <name>4-imidazolone-5-propanoate</name>
        <dbReference type="ChEBI" id="CHEBI:77893"/>
    </ligand>
</feature>
<feature type="binding site" evidence="1">
    <location>
        <position position="144"/>
    </location>
    <ligand>
        <name>N-formimidoyl-L-glutamate</name>
        <dbReference type="ChEBI" id="CHEBI:58928"/>
    </ligand>
</feature>
<feature type="binding site" evidence="1">
    <location>
        <position position="177"/>
    </location>
    <ligand>
        <name>4-imidazolone-5-propanoate</name>
        <dbReference type="ChEBI" id="CHEBI:77893"/>
    </ligand>
</feature>
<feature type="binding site" evidence="1">
    <location>
        <position position="242"/>
    </location>
    <ligand>
        <name>Fe(3+)</name>
        <dbReference type="ChEBI" id="CHEBI:29034"/>
    </ligand>
</feature>
<feature type="binding site" evidence="1">
    <location>
        <position position="242"/>
    </location>
    <ligand>
        <name>Zn(2+)</name>
        <dbReference type="ChEBI" id="CHEBI:29105"/>
    </ligand>
</feature>
<feature type="binding site" evidence="1">
    <location>
        <position position="245"/>
    </location>
    <ligand>
        <name>4-imidazolone-5-propanoate</name>
        <dbReference type="ChEBI" id="CHEBI:77893"/>
    </ligand>
</feature>
<feature type="binding site" evidence="1">
    <location>
        <position position="317"/>
    </location>
    <ligand>
        <name>Fe(3+)</name>
        <dbReference type="ChEBI" id="CHEBI:29034"/>
    </ligand>
</feature>
<feature type="binding site" evidence="1">
    <location>
        <position position="317"/>
    </location>
    <ligand>
        <name>Zn(2+)</name>
        <dbReference type="ChEBI" id="CHEBI:29105"/>
    </ligand>
</feature>
<feature type="binding site" evidence="1">
    <location>
        <position position="319"/>
    </location>
    <ligand>
        <name>N-formimidoyl-L-glutamate</name>
        <dbReference type="ChEBI" id="CHEBI:58928"/>
    </ligand>
</feature>
<feature type="binding site" evidence="1">
    <location>
        <position position="321"/>
    </location>
    <ligand>
        <name>N-formimidoyl-L-glutamate</name>
        <dbReference type="ChEBI" id="CHEBI:58928"/>
    </ligand>
</feature>
<feature type="binding site" evidence="1">
    <location>
        <position position="322"/>
    </location>
    <ligand>
        <name>4-imidazolone-5-propanoate</name>
        <dbReference type="ChEBI" id="CHEBI:77893"/>
    </ligand>
</feature>
<accession>A9QZ55</accession>